<sequence>MKKEQLVADLEALCAPIVKEKGYDLYHIEYVKENNEYYLRLYIEKPEERISLRDCEIVSRALSDMLDIEDPIKDAYFLEVSSPGLNRRLHSDEHFNRFIGKEIFVGFKSSLSGRKNVKGILKDVQENEIIVECEGNEIKVPKDKIKTANLEGEI</sequence>
<comment type="function">
    <text evidence="1">Required for maturation of 30S ribosomal subunits.</text>
</comment>
<comment type="subcellular location">
    <subcellularLocation>
        <location evidence="1">Cytoplasm</location>
    </subcellularLocation>
</comment>
<comment type="similarity">
    <text evidence="1">Belongs to the RimP family.</text>
</comment>
<reference key="1">
    <citation type="journal article" date="2006" name="Genome Res.">
        <title>Skewed genomic variability in strains of the toxigenic bacterial pathogen, Clostridium perfringens.</title>
        <authorList>
            <person name="Myers G.S.A."/>
            <person name="Rasko D.A."/>
            <person name="Cheung J.K."/>
            <person name="Ravel J."/>
            <person name="Seshadri R."/>
            <person name="DeBoy R.T."/>
            <person name="Ren Q."/>
            <person name="Varga J."/>
            <person name="Awad M.M."/>
            <person name="Brinkac L.M."/>
            <person name="Daugherty S.C."/>
            <person name="Haft D.H."/>
            <person name="Dodson R.J."/>
            <person name="Madupu R."/>
            <person name="Nelson W.C."/>
            <person name="Rosovitz M.J."/>
            <person name="Sullivan S.A."/>
            <person name="Khouri H."/>
            <person name="Dimitrov G.I."/>
            <person name="Watkins K.L."/>
            <person name="Mulligan S."/>
            <person name="Benton J."/>
            <person name="Radune D."/>
            <person name="Fisher D.J."/>
            <person name="Atkins H.S."/>
            <person name="Hiscox T."/>
            <person name="Jost B.H."/>
            <person name="Billington S.J."/>
            <person name="Songer J.G."/>
            <person name="McClane B.A."/>
            <person name="Titball R.W."/>
            <person name="Rood J.I."/>
            <person name="Melville S.B."/>
            <person name="Paulsen I.T."/>
        </authorList>
    </citation>
    <scope>NUCLEOTIDE SEQUENCE [LARGE SCALE GENOMIC DNA]</scope>
    <source>
        <strain>SM101 / Type A</strain>
    </source>
</reference>
<dbReference type="EMBL" id="CP000312">
    <property type="protein sequence ID" value="ABG85508.1"/>
    <property type="molecule type" value="Genomic_DNA"/>
</dbReference>
<dbReference type="RefSeq" id="WP_011592592.1">
    <property type="nucleotide sequence ID" value="NC_008262.1"/>
</dbReference>
<dbReference type="SMR" id="Q0SSD0"/>
<dbReference type="KEGG" id="cpr:CPR_1662"/>
<dbReference type="Proteomes" id="UP000001824">
    <property type="component" value="Chromosome"/>
</dbReference>
<dbReference type="GO" id="GO:0005829">
    <property type="term" value="C:cytosol"/>
    <property type="evidence" value="ECO:0007669"/>
    <property type="project" value="TreeGrafter"/>
</dbReference>
<dbReference type="GO" id="GO:0000028">
    <property type="term" value="P:ribosomal small subunit assembly"/>
    <property type="evidence" value="ECO:0007669"/>
    <property type="project" value="TreeGrafter"/>
</dbReference>
<dbReference type="GO" id="GO:0006412">
    <property type="term" value="P:translation"/>
    <property type="evidence" value="ECO:0007669"/>
    <property type="project" value="TreeGrafter"/>
</dbReference>
<dbReference type="CDD" id="cd01734">
    <property type="entry name" value="YlxS_C"/>
    <property type="match status" value="1"/>
</dbReference>
<dbReference type="FunFam" id="3.30.300.70:FF:000001">
    <property type="entry name" value="Ribosome maturation factor RimP"/>
    <property type="match status" value="1"/>
</dbReference>
<dbReference type="Gene3D" id="2.30.30.180">
    <property type="entry name" value="Ribosome maturation factor RimP, C-terminal domain"/>
    <property type="match status" value="1"/>
</dbReference>
<dbReference type="Gene3D" id="3.30.300.70">
    <property type="entry name" value="RimP-like superfamily, N-terminal"/>
    <property type="match status" value="1"/>
</dbReference>
<dbReference type="HAMAP" id="MF_01077">
    <property type="entry name" value="RimP"/>
    <property type="match status" value="1"/>
</dbReference>
<dbReference type="InterPro" id="IPR003728">
    <property type="entry name" value="Ribosome_maturation_RimP"/>
</dbReference>
<dbReference type="InterPro" id="IPR028998">
    <property type="entry name" value="RimP_C"/>
</dbReference>
<dbReference type="InterPro" id="IPR036847">
    <property type="entry name" value="RimP_C_sf"/>
</dbReference>
<dbReference type="InterPro" id="IPR028989">
    <property type="entry name" value="RimP_N"/>
</dbReference>
<dbReference type="InterPro" id="IPR035956">
    <property type="entry name" value="RimP_N_sf"/>
</dbReference>
<dbReference type="NCBIfam" id="NF000934">
    <property type="entry name" value="PRK00092.3-1"/>
    <property type="match status" value="1"/>
</dbReference>
<dbReference type="PANTHER" id="PTHR33867">
    <property type="entry name" value="RIBOSOME MATURATION FACTOR RIMP"/>
    <property type="match status" value="1"/>
</dbReference>
<dbReference type="PANTHER" id="PTHR33867:SF1">
    <property type="entry name" value="RIBOSOME MATURATION FACTOR RIMP"/>
    <property type="match status" value="1"/>
</dbReference>
<dbReference type="Pfam" id="PF17384">
    <property type="entry name" value="DUF150_C"/>
    <property type="match status" value="1"/>
</dbReference>
<dbReference type="Pfam" id="PF02576">
    <property type="entry name" value="RimP_N"/>
    <property type="match status" value="1"/>
</dbReference>
<dbReference type="SUPFAM" id="SSF74942">
    <property type="entry name" value="YhbC-like, C-terminal domain"/>
    <property type="match status" value="1"/>
</dbReference>
<dbReference type="SUPFAM" id="SSF75420">
    <property type="entry name" value="YhbC-like, N-terminal domain"/>
    <property type="match status" value="1"/>
</dbReference>
<evidence type="ECO:0000255" key="1">
    <source>
        <dbReference type="HAMAP-Rule" id="MF_01077"/>
    </source>
</evidence>
<name>RIMP_CLOPS</name>
<accession>Q0SSD0</accession>
<protein>
    <recommendedName>
        <fullName evidence="1">Ribosome maturation factor RimP</fullName>
    </recommendedName>
</protein>
<feature type="chain" id="PRO_1000064707" description="Ribosome maturation factor RimP">
    <location>
        <begin position="1"/>
        <end position="154"/>
    </location>
</feature>
<organism>
    <name type="scientific">Clostridium perfringens (strain SM101 / Type A)</name>
    <dbReference type="NCBI Taxonomy" id="289380"/>
    <lineage>
        <taxon>Bacteria</taxon>
        <taxon>Bacillati</taxon>
        <taxon>Bacillota</taxon>
        <taxon>Clostridia</taxon>
        <taxon>Eubacteriales</taxon>
        <taxon>Clostridiaceae</taxon>
        <taxon>Clostridium</taxon>
    </lineage>
</organism>
<gene>
    <name evidence="1" type="primary">rimP</name>
    <name type="ordered locus">CPR_1662</name>
</gene>
<keyword id="KW-0963">Cytoplasm</keyword>
<keyword id="KW-0690">Ribosome biogenesis</keyword>
<proteinExistence type="inferred from homology"/>